<evidence type="ECO:0000255" key="1">
    <source>
        <dbReference type="HAMAP-Rule" id="MF_00154"/>
    </source>
</evidence>
<gene>
    <name evidence="1" type="primary">ctaB</name>
    <name type="ordered locus">OTT_1195</name>
</gene>
<keyword id="KW-0997">Cell inner membrane</keyword>
<keyword id="KW-1003">Cell membrane</keyword>
<keyword id="KW-0350">Heme biosynthesis</keyword>
<keyword id="KW-0472">Membrane</keyword>
<keyword id="KW-0808">Transferase</keyword>
<keyword id="KW-0812">Transmembrane</keyword>
<keyword id="KW-1133">Transmembrane helix</keyword>
<organism>
    <name type="scientific">Orientia tsutsugamushi (strain Ikeda)</name>
    <name type="common">Rickettsia tsutsugamushi</name>
    <dbReference type="NCBI Taxonomy" id="334380"/>
    <lineage>
        <taxon>Bacteria</taxon>
        <taxon>Pseudomonadati</taxon>
        <taxon>Pseudomonadota</taxon>
        <taxon>Alphaproteobacteria</taxon>
        <taxon>Rickettsiales</taxon>
        <taxon>Rickettsiaceae</taxon>
        <taxon>Rickettsieae</taxon>
        <taxon>Orientia</taxon>
    </lineage>
</organism>
<protein>
    <recommendedName>
        <fullName evidence="1">Protoheme IX farnesyltransferase</fullName>
        <ecNumber evidence="1">2.5.1.141</ecNumber>
    </recommendedName>
    <alternativeName>
        <fullName evidence="1">Heme B farnesyltransferase</fullName>
    </alternativeName>
    <alternativeName>
        <fullName evidence="1">Heme O synthase</fullName>
    </alternativeName>
</protein>
<reference key="1">
    <citation type="journal article" date="2008" name="DNA Res.">
        <title>The whole-genome sequencing of the obligate intracellular bacterium Orientia tsutsugamushi revealed massive gene amplification during reductive genome evolution.</title>
        <authorList>
            <person name="Nakayama K."/>
            <person name="Yamashita A."/>
            <person name="Kurokawa K."/>
            <person name="Morimoto T."/>
            <person name="Ogawa M."/>
            <person name="Fukuhara M."/>
            <person name="Urakami H."/>
            <person name="Ohnishi M."/>
            <person name="Uchiyama I."/>
            <person name="Ogura Y."/>
            <person name="Ooka T."/>
            <person name="Oshima K."/>
            <person name="Tamura A."/>
            <person name="Hattori M."/>
            <person name="Hayashi T."/>
        </authorList>
    </citation>
    <scope>NUCLEOTIDE SEQUENCE [LARGE SCALE GENOMIC DNA]</scope>
    <source>
        <strain>Ikeda</strain>
    </source>
</reference>
<dbReference type="EC" id="2.5.1.141" evidence="1"/>
<dbReference type="EMBL" id="AP008981">
    <property type="protein sequence ID" value="BAG40653.1"/>
    <property type="molecule type" value="Genomic_DNA"/>
</dbReference>
<dbReference type="RefSeq" id="WP_012461721.1">
    <property type="nucleotide sequence ID" value="NC_010793.1"/>
</dbReference>
<dbReference type="SMR" id="B3CTF6"/>
<dbReference type="KEGG" id="ott:OTT_1195"/>
<dbReference type="HOGENOM" id="CLU_029631_0_2_5"/>
<dbReference type="OrthoDB" id="9814417at2"/>
<dbReference type="UniPathway" id="UPA00834">
    <property type="reaction ID" value="UER00712"/>
</dbReference>
<dbReference type="Proteomes" id="UP000001033">
    <property type="component" value="Chromosome"/>
</dbReference>
<dbReference type="GO" id="GO:0005886">
    <property type="term" value="C:plasma membrane"/>
    <property type="evidence" value="ECO:0007669"/>
    <property type="project" value="UniProtKB-SubCell"/>
</dbReference>
<dbReference type="GO" id="GO:0008495">
    <property type="term" value="F:protoheme IX farnesyltransferase activity"/>
    <property type="evidence" value="ECO:0007669"/>
    <property type="project" value="UniProtKB-UniRule"/>
</dbReference>
<dbReference type="GO" id="GO:0048034">
    <property type="term" value="P:heme O biosynthetic process"/>
    <property type="evidence" value="ECO:0007669"/>
    <property type="project" value="UniProtKB-UniRule"/>
</dbReference>
<dbReference type="CDD" id="cd13957">
    <property type="entry name" value="PT_UbiA_Cox10"/>
    <property type="match status" value="1"/>
</dbReference>
<dbReference type="Gene3D" id="1.10.357.140">
    <property type="entry name" value="UbiA prenyltransferase"/>
    <property type="match status" value="1"/>
</dbReference>
<dbReference type="HAMAP" id="MF_00154">
    <property type="entry name" value="CyoE_CtaB"/>
    <property type="match status" value="1"/>
</dbReference>
<dbReference type="InterPro" id="IPR006369">
    <property type="entry name" value="Protohaem_IX_farnesylTrfase"/>
</dbReference>
<dbReference type="InterPro" id="IPR000537">
    <property type="entry name" value="UbiA_prenyltransferase"/>
</dbReference>
<dbReference type="InterPro" id="IPR030470">
    <property type="entry name" value="UbiA_prenylTrfase_CS"/>
</dbReference>
<dbReference type="InterPro" id="IPR044878">
    <property type="entry name" value="UbiA_sf"/>
</dbReference>
<dbReference type="NCBIfam" id="TIGR01473">
    <property type="entry name" value="cyoE_ctaB"/>
    <property type="match status" value="1"/>
</dbReference>
<dbReference type="NCBIfam" id="NF003349">
    <property type="entry name" value="PRK04375.1-2"/>
    <property type="match status" value="1"/>
</dbReference>
<dbReference type="PANTHER" id="PTHR43448:SF7">
    <property type="entry name" value="4-HYDROXYBENZOATE SOLANESYLTRANSFERASE"/>
    <property type="match status" value="1"/>
</dbReference>
<dbReference type="PANTHER" id="PTHR43448">
    <property type="entry name" value="PROTOHEME IX FARNESYLTRANSFERASE, MITOCHONDRIAL"/>
    <property type="match status" value="1"/>
</dbReference>
<dbReference type="Pfam" id="PF01040">
    <property type="entry name" value="UbiA"/>
    <property type="match status" value="1"/>
</dbReference>
<dbReference type="PROSITE" id="PS00943">
    <property type="entry name" value="UBIA"/>
    <property type="match status" value="1"/>
</dbReference>
<proteinExistence type="inferred from homology"/>
<accession>B3CTF6</accession>
<comment type="function">
    <text evidence="1">Converts heme B (protoheme IX) to heme O by substitution of the vinyl group on carbon 2 of heme B porphyrin ring with a hydroxyethyl farnesyl side group.</text>
</comment>
<comment type="catalytic activity">
    <reaction evidence="1">
        <text>heme b + (2E,6E)-farnesyl diphosphate + H2O = Fe(II)-heme o + diphosphate</text>
        <dbReference type="Rhea" id="RHEA:28070"/>
        <dbReference type="ChEBI" id="CHEBI:15377"/>
        <dbReference type="ChEBI" id="CHEBI:33019"/>
        <dbReference type="ChEBI" id="CHEBI:60344"/>
        <dbReference type="ChEBI" id="CHEBI:60530"/>
        <dbReference type="ChEBI" id="CHEBI:175763"/>
        <dbReference type="EC" id="2.5.1.141"/>
    </reaction>
</comment>
<comment type="pathway">
    <text evidence="1">Porphyrin-containing compound metabolism; heme O biosynthesis; heme O from protoheme: step 1/1.</text>
</comment>
<comment type="subcellular location">
    <subcellularLocation>
        <location evidence="1">Cell inner membrane</location>
        <topology evidence="1">Multi-pass membrane protein</topology>
    </subcellularLocation>
</comment>
<comment type="miscellaneous">
    <text evidence="1">Carbon 2 of the heme B porphyrin ring is defined according to the Fischer nomenclature.</text>
</comment>
<comment type="similarity">
    <text evidence="1">Belongs to the UbiA prenyltransferase family. Protoheme IX farnesyltransferase subfamily.</text>
</comment>
<feature type="chain" id="PRO_1000096924" description="Protoheme IX farnesyltransferase">
    <location>
        <begin position="1"/>
        <end position="312"/>
    </location>
</feature>
<feature type="transmembrane region" description="Helical" evidence="1">
    <location>
        <begin position="31"/>
        <end position="51"/>
    </location>
</feature>
<feature type="transmembrane region" description="Helical" evidence="1">
    <location>
        <begin position="58"/>
        <end position="78"/>
    </location>
</feature>
<feature type="transmembrane region" description="Helical" evidence="1">
    <location>
        <begin position="107"/>
        <end position="127"/>
    </location>
</feature>
<feature type="transmembrane region" description="Helical" evidence="1">
    <location>
        <begin position="130"/>
        <end position="150"/>
    </location>
</feature>
<feature type="transmembrane region" description="Helical" evidence="1">
    <location>
        <begin position="157"/>
        <end position="177"/>
    </location>
</feature>
<feature type="transmembrane region" description="Helical" evidence="1">
    <location>
        <begin position="184"/>
        <end position="204"/>
    </location>
</feature>
<feature type="transmembrane region" description="Helical" evidence="1">
    <location>
        <begin position="229"/>
        <end position="249"/>
    </location>
</feature>
<feature type="transmembrane region" description="Helical" evidence="1">
    <location>
        <begin position="250"/>
        <end position="270"/>
    </location>
</feature>
<feature type="transmembrane region" description="Helical" evidence="1">
    <location>
        <begin position="286"/>
        <end position="306"/>
    </location>
</feature>
<name>COXX_ORITI</name>
<sequence>MPNSHSTQSTPVKNFQNKFLVLTSTPKDFLLLMKPSVMLLAVFTAITGLFIAPNKIHPLLSSIAILCISTGAGAAGAINMWYDADIDSIMKRTRNRPTVTGKIPPSTALTFGIILAFFSVLVMAICVNYISSILLLISISFYIIVYTMWLKRRTAQNIVIGGAAGALPPVIGYSAVTNSIDTTCLMLFLIIFLWTPAHFWTLSLYYTNDYKLANVPILPLVKGINYTKYSILAYTFLTVISASLPYFTDIAGLLYLICSTISGIIFLCYASMLFNDRNNILARKMFKYSIIYLFNIFLYLIIEHCIKHFNIS</sequence>